<gene>
    <name type="primary">Arpc1a</name>
</gene>
<name>ARC1A_RAT</name>
<keyword id="KW-0009">Actin-binding</keyword>
<keyword id="KW-0963">Cytoplasm</keyword>
<keyword id="KW-0206">Cytoskeleton</keyword>
<keyword id="KW-0539">Nucleus</keyword>
<keyword id="KW-1185">Reference proteome</keyword>
<keyword id="KW-0677">Repeat</keyword>
<keyword id="KW-0853">WD repeat</keyword>
<dbReference type="EMBL" id="AF315378">
    <property type="protein sequence ID" value="AAK01364.1"/>
    <property type="molecule type" value="mRNA"/>
</dbReference>
<dbReference type="RefSeq" id="NP_112408.1">
    <property type="nucleotide sequence ID" value="NM_031146.2"/>
</dbReference>
<dbReference type="SMR" id="Q99PD4"/>
<dbReference type="BioGRID" id="249682">
    <property type="interactions" value="3"/>
</dbReference>
<dbReference type="FunCoup" id="Q99PD4">
    <property type="interactions" value="3402"/>
</dbReference>
<dbReference type="IntAct" id="Q99PD4">
    <property type="interactions" value="1"/>
</dbReference>
<dbReference type="STRING" id="10116.ENSRNOP00000001319"/>
<dbReference type="iPTMnet" id="Q99PD4"/>
<dbReference type="PhosphoSitePlus" id="Q99PD4"/>
<dbReference type="SwissPalm" id="Q99PD4"/>
<dbReference type="jPOST" id="Q99PD4"/>
<dbReference type="PaxDb" id="10116-ENSRNOP00000001319"/>
<dbReference type="GeneID" id="81824"/>
<dbReference type="KEGG" id="rno:81824"/>
<dbReference type="AGR" id="RGD:620834"/>
<dbReference type="CTD" id="10552"/>
<dbReference type="RGD" id="620834">
    <property type="gene designation" value="Arpc1a"/>
</dbReference>
<dbReference type="eggNOG" id="KOG1523">
    <property type="taxonomic scope" value="Eukaryota"/>
</dbReference>
<dbReference type="InParanoid" id="Q99PD4"/>
<dbReference type="OrthoDB" id="8831at9989"/>
<dbReference type="PhylomeDB" id="Q99PD4"/>
<dbReference type="Reactome" id="R-RNO-2029482">
    <property type="pathway name" value="Regulation of actin dynamics for phagocytic cup formation"/>
</dbReference>
<dbReference type="Reactome" id="R-RNO-3928662">
    <property type="pathway name" value="EPHB-mediated forward signaling"/>
</dbReference>
<dbReference type="Reactome" id="R-RNO-5663213">
    <property type="pathway name" value="RHO GTPases Activate WASPs and WAVEs"/>
</dbReference>
<dbReference type="Reactome" id="R-RNO-8856828">
    <property type="pathway name" value="Clathrin-mediated endocytosis"/>
</dbReference>
<dbReference type="PRO" id="PR:Q99PD4"/>
<dbReference type="Proteomes" id="UP000002494">
    <property type="component" value="Unplaced"/>
</dbReference>
<dbReference type="GO" id="GO:0005885">
    <property type="term" value="C:Arp2/3 protein complex"/>
    <property type="evidence" value="ECO:0000250"/>
    <property type="project" value="UniProtKB"/>
</dbReference>
<dbReference type="GO" id="GO:0005737">
    <property type="term" value="C:cytoplasm"/>
    <property type="evidence" value="ECO:0007669"/>
    <property type="project" value="UniProtKB-KW"/>
</dbReference>
<dbReference type="GO" id="GO:0098978">
    <property type="term" value="C:glutamatergic synapse"/>
    <property type="evidence" value="ECO:0000266"/>
    <property type="project" value="RGD"/>
</dbReference>
<dbReference type="GO" id="GO:0036195">
    <property type="term" value="C:muscle cell projection membrane"/>
    <property type="evidence" value="ECO:0000266"/>
    <property type="project" value="RGD"/>
</dbReference>
<dbReference type="GO" id="GO:0005634">
    <property type="term" value="C:nucleus"/>
    <property type="evidence" value="ECO:0000250"/>
    <property type="project" value="UniProtKB"/>
</dbReference>
<dbReference type="GO" id="GO:0035861">
    <property type="term" value="C:site of double-strand break"/>
    <property type="evidence" value="ECO:0000250"/>
    <property type="project" value="UniProtKB"/>
</dbReference>
<dbReference type="GO" id="GO:0045202">
    <property type="term" value="C:synapse"/>
    <property type="evidence" value="ECO:0000266"/>
    <property type="project" value="RGD"/>
</dbReference>
<dbReference type="GO" id="GO:0051015">
    <property type="term" value="F:actin filament binding"/>
    <property type="evidence" value="ECO:0000318"/>
    <property type="project" value="GO_Central"/>
</dbReference>
<dbReference type="GO" id="GO:0034314">
    <property type="term" value="P:Arp2/3 complex-mediated actin nucleation"/>
    <property type="evidence" value="ECO:0000318"/>
    <property type="project" value="GO_Central"/>
</dbReference>
<dbReference type="FunFam" id="2.130.10.10:FF:000030">
    <property type="entry name" value="Actin-related protein 2/3 complex subunit"/>
    <property type="match status" value="1"/>
</dbReference>
<dbReference type="Gene3D" id="2.130.10.10">
    <property type="entry name" value="YVTN repeat-like/Quinoprotein amine dehydrogenase"/>
    <property type="match status" value="1"/>
</dbReference>
<dbReference type="InterPro" id="IPR017383">
    <property type="entry name" value="ARPC1"/>
</dbReference>
<dbReference type="InterPro" id="IPR015943">
    <property type="entry name" value="WD40/YVTN_repeat-like_dom_sf"/>
</dbReference>
<dbReference type="InterPro" id="IPR036322">
    <property type="entry name" value="WD40_repeat_dom_sf"/>
</dbReference>
<dbReference type="InterPro" id="IPR001680">
    <property type="entry name" value="WD40_rpt"/>
</dbReference>
<dbReference type="PANTHER" id="PTHR10709">
    <property type="entry name" value="ACTIN-RELATED PROTEIN 2/3 COMPLEX SUBUNIT 1"/>
    <property type="match status" value="1"/>
</dbReference>
<dbReference type="PANTHER" id="PTHR10709:SF11">
    <property type="entry name" value="ACTIN-RELATED PROTEIN 2_3 COMPLEX SUBUNIT 1A"/>
    <property type="match status" value="1"/>
</dbReference>
<dbReference type="Pfam" id="PF00400">
    <property type="entry name" value="WD40"/>
    <property type="match status" value="2"/>
</dbReference>
<dbReference type="PIRSF" id="PIRSF038093">
    <property type="entry name" value="ARP2/3_su1"/>
    <property type="match status" value="1"/>
</dbReference>
<dbReference type="SMART" id="SM00320">
    <property type="entry name" value="WD40"/>
    <property type="match status" value="6"/>
</dbReference>
<dbReference type="SUPFAM" id="SSF50978">
    <property type="entry name" value="WD40 repeat-like"/>
    <property type="match status" value="1"/>
</dbReference>
<dbReference type="PROSITE" id="PS50082">
    <property type="entry name" value="WD_REPEATS_2"/>
    <property type="match status" value="1"/>
</dbReference>
<dbReference type="PROSITE" id="PS50294">
    <property type="entry name" value="WD_REPEATS_REGION"/>
    <property type="match status" value="1"/>
</dbReference>
<organism>
    <name type="scientific">Rattus norvegicus</name>
    <name type="common">Rat</name>
    <dbReference type="NCBI Taxonomy" id="10116"/>
    <lineage>
        <taxon>Eukaryota</taxon>
        <taxon>Metazoa</taxon>
        <taxon>Chordata</taxon>
        <taxon>Craniata</taxon>
        <taxon>Vertebrata</taxon>
        <taxon>Euteleostomi</taxon>
        <taxon>Mammalia</taxon>
        <taxon>Eutheria</taxon>
        <taxon>Euarchontoglires</taxon>
        <taxon>Glires</taxon>
        <taxon>Rodentia</taxon>
        <taxon>Myomorpha</taxon>
        <taxon>Muroidea</taxon>
        <taxon>Muridae</taxon>
        <taxon>Murinae</taxon>
        <taxon>Rattus</taxon>
    </lineage>
</organism>
<proteinExistence type="evidence at transcript level"/>
<feature type="chain" id="PRO_0000050854" description="Actin-related protein 2/3 complex subunit 1A">
    <location>
        <begin position="1"/>
        <end position="370"/>
    </location>
</feature>
<feature type="repeat" description="WD 1">
    <location>
        <begin position="6"/>
        <end position="45"/>
    </location>
</feature>
<feature type="repeat" description="WD 2">
    <location>
        <begin position="50"/>
        <end position="89"/>
    </location>
</feature>
<feature type="repeat" description="WD 3">
    <location>
        <begin position="140"/>
        <end position="179"/>
    </location>
</feature>
<feature type="repeat" description="WD 4">
    <location>
        <begin position="202"/>
        <end position="241"/>
    </location>
</feature>
<feature type="repeat" description="WD 5">
    <location>
        <begin position="244"/>
        <end position="284"/>
    </location>
</feature>
<feature type="repeat" description="WD 6">
    <location>
        <begin position="322"/>
        <end position="365"/>
    </location>
</feature>
<reference key="1">
    <citation type="submission" date="2000-10" db="EMBL/GenBank/DDBJ databases">
        <title>cDNA coding sequence of mammalian sop2p (suppressor of profilin)/p41arc (p41 of actin-related complex 2/3).</title>
        <authorList>
            <person name="Jia Y."/>
            <person name="Ransom R.F."/>
            <person name="Welsh M.J."/>
            <person name="Smoyer W.E."/>
        </authorList>
    </citation>
    <scope>NUCLEOTIDE SEQUENCE [MRNA]</scope>
    <source>
        <strain>Sprague-Dawley</strain>
        <tissue>Kidney</tissue>
    </source>
</reference>
<sequence length="370" mass="41599">MSLHQFLLEPITCHAWNRDRTQIALSPNNHEVHIYKKNGSQWTKAHELKEHNGHITGIDWAPKSDRIVTCGADRNAYVWSQKDGIWKPTLVILRINRAATFVKWSPLENKFAVGSGARLISVCYFESENDWWVSKHIKKPIRSTVLSLDWHPNNVLLAAGSCDFKCRVFSAYIKEVDEKPASTPWGSKMPFGQLMSEFGGSGTGGWVHGVSFSASGSRLAWVSHDSTVSVADASKSVQVSTLRTEFLPLLSVSFVSENSVVAAGHDCCPMLFNYDDRGCLTFVSKLDVPKQSIQRNMSAMERFRNMDKRATTEDRNTALETLHQNSITQVSIYEVDKQDCRKFCTTGIDGAMTIWDFKTLESSIQGLRIM</sequence>
<comment type="function">
    <text evidence="1 2">Probably functions as a component of the Arp2/3 complex which is involved in regulation of actin polymerization and together with an activating nucleation-promoting factor (NPF) mediates the formation of branched actin networks (By similarity). In addition to its role in the cytoplasmic cytoskeleton, the Arp2/3 complex also promotes actin polymerization in the nucleus, thereby regulating gene transcription and repair of damaged DNA (By similarity).</text>
</comment>
<comment type="subunit">
    <text evidence="2">Probable component of the Arp2/3 complex in which it may replace ARPC1B.</text>
</comment>
<comment type="subcellular location">
    <subcellularLocation>
        <location evidence="2">Cytoplasm</location>
        <location evidence="2">Cytoskeleton</location>
    </subcellularLocation>
    <subcellularLocation>
        <location evidence="1">Nucleus</location>
    </subcellularLocation>
</comment>
<comment type="similarity">
    <text evidence="3">Belongs to the WD repeat ARPC1 family.</text>
</comment>
<accession>Q99PD4</accession>
<evidence type="ECO:0000250" key="1">
    <source>
        <dbReference type="UniProtKB" id="Q8AVT9"/>
    </source>
</evidence>
<evidence type="ECO:0000250" key="2">
    <source>
        <dbReference type="UniProtKB" id="Q92747"/>
    </source>
</evidence>
<evidence type="ECO:0000305" key="3"/>
<protein>
    <recommendedName>
        <fullName>Actin-related protein 2/3 complex subunit 1A</fullName>
    </recommendedName>
</protein>